<protein>
    <recommendedName>
        <fullName evidence="1">Ribonuclease HII</fullName>
        <shortName evidence="1">RNase HII</shortName>
        <ecNumber evidence="1">3.1.26.4</ecNumber>
    </recommendedName>
</protein>
<comment type="function">
    <text evidence="1">Endonuclease that specifically degrades the RNA of RNA-DNA hybrids.</text>
</comment>
<comment type="catalytic activity">
    <reaction evidence="1">
        <text>Endonucleolytic cleavage to 5'-phosphomonoester.</text>
        <dbReference type="EC" id="3.1.26.4"/>
    </reaction>
</comment>
<comment type="cofactor">
    <cofactor evidence="1">
        <name>Mn(2+)</name>
        <dbReference type="ChEBI" id="CHEBI:29035"/>
    </cofactor>
    <cofactor evidence="1">
        <name>Mg(2+)</name>
        <dbReference type="ChEBI" id="CHEBI:18420"/>
    </cofactor>
    <text evidence="1">Manganese or magnesium. Binds 1 divalent metal ion per monomer in the absence of substrate. May bind a second metal ion after substrate binding.</text>
</comment>
<comment type="subcellular location">
    <subcellularLocation>
        <location evidence="1">Cytoplasm</location>
    </subcellularLocation>
</comment>
<comment type="similarity">
    <text evidence="1">Belongs to the RNase HII family.</text>
</comment>
<gene>
    <name evidence="1" type="primary">rnhB</name>
    <name type="ordered locus">PSHAa2016</name>
</gene>
<organism>
    <name type="scientific">Pseudoalteromonas translucida (strain TAC 125)</name>
    <dbReference type="NCBI Taxonomy" id="326442"/>
    <lineage>
        <taxon>Bacteria</taxon>
        <taxon>Pseudomonadati</taxon>
        <taxon>Pseudomonadota</taxon>
        <taxon>Gammaproteobacteria</taxon>
        <taxon>Alteromonadales</taxon>
        <taxon>Pseudoalteromonadaceae</taxon>
        <taxon>Pseudoalteromonas</taxon>
    </lineage>
</organism>
<dbReference type="EC" id="3.1.26.4" evidence="1"/>
<dbReference type="EMBL" id="CR954246">
    <property type="protein sequence ID" value="CAI87072.1"/>
    <property type="molecule type" value="Genomic_DNA"/>
</dbReference>
<dbReference type="SMR" id="Q3IIW9"/>
<dbReference type="STRING" id="326442.PSHAa2016"/>
<dbReference type="KEGG" id="pha:PSHAa2016"/>
<dbReference type="PATRIC" id="fig|326442.8.peg.1943"/>
<dbReference type="eggNOG" id="COG0164">
    <property type="taxonomic scope" value="Bacteria"/>
</dbReference>
<dbReference type="HOGENOM" id="CLU_036532_3_2_6"/>
<dbReference type="BioCyc" id="PHAL326442:PSHA_RS09960-MONOMER"/>
<dbReference type="Proteomes" id="UP000006843">
    <property type="component" value="Chromosome I"/>
</dbReference>
<dbReference type="GO" id="GO:0005737">
    <property type="term" value="C:cytoplasm"/>
    <property type="evidence" value="ECO:0007669"/>
    <property type="project" value="UniProtKB-SubCell"/>
</dbReference>
<dbReference type="GO" id="GO:0032299">
    <property type="term" value="C:ribonuclease H2 complex"/>
    <property type="evidence" value="ECO:0007669"/>
    <property type="project" value="TreeGrafter"/>
</dbReference>
<dbReference type="GO" id="GO:0030145">
    <property type="term" value="F:manganese ion binding"/>
    <property type="evidence" value="ECO:0007669"/>
    <property type="project" value="UniProtKB-UniRule"/>
</dbReference>
<dbReference type="GO" id="GO:0003723">
    <property type="term" value="F:RNA binding"/>
    <property type="evidence" value="ECO:0007669"/>
    <property type="project" value="InterPro"/>
</dbReference>
<dbReference type="GO" id="GO:0004523">
    <property type="term" value="F:RNA-DNA hybrid ribonuclease activity"/>
    <property type="evidence" value="ECO:0007669"/>
    <property type="project" value="UniProtKB-UniRule"/>
</dbReference>
<dbReference type="GO" id="GO:0043137">
    <property type="term" value="P:DNA replication, removal of RNA primer"/>
    <property type="evidence" value="ECO:0007669"/>
    <property type="project" value="TreeGrafter"/>
</dbReference>
<dbReference type="GO" id="GO:0006298">
    <property type="term" value="P:mismatch repair"/>
    <property type="evidence" value="ECO:0007669"/>
    <property type="project" value="TreeGrafter"/>
</dbReference>
<dbReference type="CDD" id="cd07182">
    <property type="entry name" value="RNase_HII_bacteria_HII_like"/>
    <property type="match status" value="1"/>
</dbReference>
<dbReference type="FunFam" id="3.30.420.10:FF:000006">
    <property type="entry name" value="Ribonuclease HII"/>
    <property type="match status" value="1"/>
</dbReference>
<dbReference type="Gene3D" id="3.30.420.10">
    <property type="entry name" value="Ribonuclease H-like superfamily/Ribonuclease H"/>
    <property type="match status" value="1"/>
</dbReference>
<dbReference type="HAMAP" id="MF_00052_B">
    <property type="entry name" value="RNase_HII_B"/>
    <property type="match status" value="1"/>
</dbReference>
<dbReference type="InterPro" id="IPR022898">
    <property type="entry name" value="RNase_HII"/>
</dbReference>
<dbReference type="InterPro" id="IPR001352">
    <property type="entry name" value="RNase_HII/HIII"/>
</dbReference>
<dbReference type="InterPro" id="IPR024567">
    <property type="entry name" value="RNase_HII/HIII_dom"/>
</dbReference>
<dbReference type="InterPro" id="IPR012337">
    <property type="entry name" value="RNaseH-like_sf"/>
</dbReference>
<dbReference type="InterPro" id="IPR036397">
    <property type="entry name" value="RNaseH_sf"/>
</dbReference>
<dbReference type="NCBIfam" id="NF000594">
    <property type="entry name" value="PRK00015.1-1"/>
    <property type="match status" value="1"/>
</dbReference>
<dbReference type="NCBIfam" id="NF000595">
    <property type="entry name" value="PRK00015.1-3"/>
    <property type="match status" value="1"/>
</dbReference>
<dbReference type="NCBIfam" id="NF000596">
    <property type="entry name" value="PRK00015.1-4"/>
    <property type="match status" value="1"/>
</dbReference>
<dbReference type="PANTHER" id="PTHR10954">
    <property type="entry name" value="RIBONUCLEASE H2 SUBUNIT A"/>
    <property type="match status" value="1"/>
</dbReference>
<dbReference type="PANTHER" id="PTHR10954:SF18">
    <property type="entry name" value="RIBONUCLEASE HII"/>
    <property type="match status" value="1"/>
</dbReference>
<dbReference type="Pfam" id="PF01351">
    <property type="entry name" value="RNase_HII"/>
    <property type="match status" value="1"/>
</dbReference>
<dbReference type="SUPFAM" id="SSF53098">
    <property type="entry name" value="Ribonuclease H-like"/>
    <property type="match status" value="1"/>
</dbReference>
<dbReference type="PROSITE" id="PS51975">
    <property type="entry name" value="RNASE_H_2"/>
    <property type="match status" value="1"/>
</dbReference>
<accession>Q3IIW9</accession>
<sequence>MQIERPNVALIAGVDEVGRGPLVGDVVTAAVILDPSKPIAGLADSKKLTDKKRQALAIEIQEKALCYAYGRCSPTEIDELNILHATMLAMTRAVEGLSTQPEFVFIDGNRLPKLTMPAQAIVKGDSLVAEISAASILAKVARDNEMVELDKRHPEYGFAGHKGYPTKAHFAALEQYGAIKEHRKSFKPVQRVLAQAKGEA</sequence>
<name>RNH2_PSET1</name>
<feature type="chain" id="PRO_0000235752" description="Ribonuclease HII">
    <location>
        <begin position="1"/>
        <end position="200"/>
    </location>
</feature>
<feature type="domain" description="RNase H type-2" evidence="2">
    <location>
        <begin position="9"/>
        <end position="198"/>
    </location>
</feature>
<feature type="binding site" evidence="1">
    <location>
        <position position="15"/>
    </location>
    <ligand>
        <name>a divalent metal cation</name>
        <dbReference type="ChEBI" id="CHEBI:60240"/>
    </ligand>
</feature>
<feature type="binding site" evidence="1">
    <location>
        <position position="16"/>
    </location>
    <ligand>
        <name>a divalent metal cation</name>
        <dbReference type="ChEBI" id="CHEBI:60240"/>
    </ligand>
</feature>
<feature type="binding site" evidence="1">
    <location>
        <position position="107"/>
    </location>
    <ligand>
        <name>a divalent metal cation</name>
        <dbReference type="ChEBI" id="CHEBI:60240"/>
    </ligand>
</feature>
<keyword id="KW-0963">Cytoplasm</keyword>
<keyword id="KW-0255">Endonuclease</keyword>
<keyword id="KW-0378">Hydrolase</keyword>
<keyword id="KW-0464">Manganese</keyword>
<keyword id="KW-0479">Metal-binding</keyword>
<keyword id="KW-0540">Nuclease</keyword>
<keyword id="KW-1185">Reference proteome</keyword>
<reference key="1">
    <citation type="journal article" date="2005" name="Genome Res.">
        <title>Coping with cold: the genome of the versatile marine Antarctica bacterium Pseudoalteromonas haloplanktis TAC125.</title>
        <authorList>
            <person name="Medigue C."/>
            <person name="Krin E."/>
            <person name="Pascal G."/>
            <person name="Barbe V."/>
            <person name="Bernsel A."/>
            <person name="Bertin P.N."/>
            <person name="Cheung F."/>
            <person name="Cruveiller S."/>
            <person name="D'Amico S."/>
            <person name="Duilio A."/>
            <person name="Fang G."/>
            <person name="Feller G."/>
            <person name="Ho C."/>
            <person name="Mangenot S."/>
            <person name="Marino G."/>
            <person name="Nilsson J."/>
            <person name="Parrilli E."/>
            <person name="Rocha E.P.C."/>
            <person name="Rouy Z."/>
            <person name="Sekowska A."/>
            <person name="Tutino M.L."/>
            <person name="Vallenet D."/>
            <person name="von Heijne G."/>
            <person name="Danchin A."/>
        </authorList>
    </citation>
    <scope>NUCLEOTIDE SEQUENCE [LARGE SCALE GENOMIC DNA]</scope>
    <source>
        <strain>TAC 125</strain>
    </source>
</reference>
<proteinExistence type="inferred from homology"/>
<evidence type="ECO:0000255" key="1">
    <source>
        <dbReference type="HAMAP-Rule" id="MF_00052"/>
    </source>
</evidence>
<evidence type="ECO:0000255" key="2">
    <source>
        <dbReference type="PROSITE-ProRule" id="PRU01319"/>
    </source>
</evidence>